<protein>
    <recommendedName>
        <fullName evidence="1">Protein E7</fullName>
    </recommendedName>
</protein>
<name>VE7_HPV39</name>
<feature type="chain" id="PRO_0000133437" description="Protein E7">
    <location>
        <begin position="1"/>
        <end position="109"/>
    </location>
</feature>
<feature type="zinc finger region" evidence="1">
    <location>
        <begin position="68"/>
        <end position="104"/>
    </location>
</feature>
<feature type="region of interest" description="E7 terminal domain" evidence="1">
    <location>
        <begin position="1"/>
        <end position="41"/>
    </location>
</feature>
<feature type="short sequence motif" description="LXCXE motif; interaction with host RB1 and TMEM173/STING" evidence="1">
    <location>
        <begin position="26"/>
        <end position="30"/>
    </location>
</feature>
<feature type="short sequence motif" description="Nuclear export signal" evidence="1">
    <location>
        <begin position="86"/>
        <end position="94"/>
    </location>
</feature>
<comment type="function">
    <text evidence="1">Plays a role in viral genome replication by driving entry of quiescent cells into the cell cycle. Stimulation of progression from G1 to S phase allows the virus to efficiently use the cellular DNA replicating machinery to achieve viral genome replication. E7 protein has both transforming and trans-activating activities. Induces the disassembly of the E2F1 transcription factor from RB1, with subsequent transcriptional activation of E2F1-regulated S-phase genes. Interferes with host histone deacetylation mediated by HDAC1 and HDAC2, leading to transcription activation. Also plays a role in the inhibition of both antiviral and antiproliferative functions of host interferon alpha. Interaction with host TMEM173/STING impairs the ability of TMEM173/STING to sense cytosolic DNA and promote the production of type I interferon (IFN-alpha and IFN-beta).</text>
</comment>
<comment type="subunit">
    <text evidence="1">Homodimer. Homooligomer. Interacts with host RB1; this interaction induces dissociation of RB1-E2F1 complex thereby disrupting RB1 activity. Interacts with host EP300; this interaction represses EP300 transcriptional activity. Interacts with protein E2; this interaction inhibits E7 oncogenic activity. Interacts with host TMEM173/STING; this interaction impairs the ability of TMEM173/STING to sense cytosolic DNA and promote the production of type I interferon (IFN-alpha and IFN-beta).</text>
</comment>
<comment type="subcellular location">
    <subcellularLocation>
        <location evidence="1">Host cytoplasm</location>
    </subcellularLocation>
    <subcellularLocation>
        <location evidence="1">Host nucleus</location>
    </subcellularLocation>
    <text evidence="1">Predominantly found in the host nucleus.</text>
</comment>
<comment type="domain">
    <text evidence="1">The E7 terminal domain is an intrinsically disordered domain, whose flexibility and conformational transitions confer target adaptability to the oncoprotein. It allows adaptation to a variety of protein targets and exposes the PEST degradation sequence that regulates its turnover in the cell.</text>
</comment>
<comment type="PTM">
    <text evidence="1">Highly phosphorylated.</text>
</comment>
<comment type="similarity">
    <text evidence="1">Belongs to the papillomaviridae E7 protein family.</text>
</comment>
<organism>
    <name type="scientific">Human papillomavirus 39</name>
    <dbReference type="NCBI Taxonomy" id="10588"/>
    <lineage>
        <taxon>Viruses</taxon>
        <taxon>Monodnaviria</taxon>
        <taxon>Shotokuvirae</taxon>
        <taxon>Cossaviricota</taxon>
        <taxon>Papovaviricetes</taxon>
        <taxon>Zurhausenvirales</taxon>
        <taxon>Papillomaviridae</taxon>
        <taxon>Firstpapillomavirinae</taxon>
        <taxon>Alphapapillomavirus</taxon>
        <taxon>Alphapapillomavirus 7</taxon>
    </lineage>
</organism>
<keyword id="KW-0010">Activator</keyword>
<keyword id="KW-0238">DNA-binding</keyword>
<keyword id="KW-0244">Early protein</keyword>
<keyword id="KW-1078">G1/S host cell cycle checkpoint dysregulation by virus</keyword>
<keyword id="KW-1035">Host cytoplasm</keyword>
<keyword id="KW-1048">Host nucleus</keyword>
<keyword id="KW-0945">Host-virus interaction</keyword>
<keyword id="KW-1090">Inhibition of host innate immune response by virus</keyword>
<keyword id="KW-1114">Inhibition of host interferon signaling pathway by virus</keyword>
<keyword id="KW-0922">Interferon antiviral system evasion</keyword>
<keyword id="KW-0479">Metal-binding</keyword>
<keyword id="KW-1121">Modulation of host cell cycle by virus</keyword>
<keyword id="KW-0553">Oncogene</keyword>
<keyword id="KW-1185">Reference proteome</keyword>
<keyword id="KW-0804">Transcription</keyword>
<keyword id="KW-0805">Transcription regulation</keyword>
<keyword id="KW-0899">Viral immunoevasion</keyword>
<keyword id="KW-0862">Zinc</keyword>
<keyword id="KW-0863">Zinc-finger</keyword>
<sequence length="109" mass="12497">MRGPKPTLQEIVLDLCPYNEIQPVDLVCHEQLGESEDEIDEPDHAVNHQHQLLARRDEPQRHTIQCSCCKCNNTLQLVVEASRDTLRQLQQLFMDSLGFVCPWCATANQ</sequence>
<organismHost>
    <name type="scientific">Homo sapiens</name>
    <name type="common">Human</name>
    <dbReference type="NCBI Taxonomy" id="9606"/>
</organismHost>
<accession>P24837</accession>
<evidence type="ECO:0000255" key="1">
    <source>
        <dbReference type="HAMAP-Rule" id="MF_04004"/>
    </source>
</evidence>
<dbReference type="EMBL" id="M62849">
    <property type="protein sequence ID" value="AAA47051.1"/>
    <property type="molecule type" value="Genomic_DNA"/>
</dbReference>
<dbReference type="PIR" id="B38502">
    <property type="entry name" value="W7WL39"/>
</dbReference>
<dbReference type="SMR" id="P24837"/>
<dbReference type="IntAct" id="P24837">
    <property type="interactions" value="26"/>
</dbReference>
<dbReference type="MINT" id="P24837"/>
<dbReference type="Proteomes" id="UP000009120">
    <property type="component" value="Genome"/>
</dbReference>
<dbReference type="GO" id="GO:0030430">
    <property type="term" value="C:host cell cytoplasm"/>
    <property type="evidence" value="ECO:0007669"/>
    <property type="project" value="UniProtKB-SubCell"/>
</dbReference>
<dbReference type="GO" id="GO:0042025">
    <property type="term" value="C:host cell nucleus"/>
    <property type="evidence" value="ECO:0007669"/>
    <property type="project" value="UniProtKB-SubCell"/>
</dbReference>
<dbReference type="GO" id="GO:0003677">
    <property type="term" value="F:DNA binding"/>
    <property type="evidence" value="ECO:0007669"/>
    <property type="project" value="UniProtKB-UniRule"/>
</dbReference>
<dbReference type="GO" id="GO:0003700">
    <property type="term" value="F:DNA-binding transcription factor activity"/>
    <property type="evidence" value="ECO:0007669"/>
    <property type="project" value="UniProtKB-UniRule"/>
</dbReference>
<dbReference type="GO" id="GO:0019904">
    <property type="term" value="F:protein domain specific binding"/>
    <property type="evidence" value="ECO:0007669"/>
    <property type="project" value="UniProtKB-UniRule"/>
</dbReference>
<dbReference type="GO" id="GO:0008270">
    <property type="term" value="F:zinc ion binding"/>
    <property type="evidence" value="ECO:0007669"/>
    <property type="project" value="UniProtKB-KW"/>
</dbReference>
<dbReference type="GO" id="GO:0006351">
    <property type="term" value="P:DNA-templated transcription"/>
    <property type="evidence" value="ECO:0007669"/>
    <property type="project" value="UniProtKB-UniRule"/>
</dbReference>
<dbReference type="GO" id="GO:0039645">
    <property type="term" value="P:symbiont-mediated perturbation of host cell cycle G1/S transition checkpoint"/>
    <property type="evidence" value="ECO:0007669"/>
    <property type="project" value="UniProtKB-UniRule"/>
</dbReference>
<dbReference type="GO" id="GO:0052170">
    <property type="term" value="P:symbiont-mediated suppression of host innate immune response"/>
    <property type="evidence" value="ECO:0007669"/>
    <property type="project" value="UniProtKB-KW"/>
</dbReference>
<dbReference type="GO" id="GO:0039502">
    <property type="term" value="P:symbiont-mediated suppression of host type I interferon-mediated signaling pathway"/>
    <property type="evidence" value="ECO:0007669"/>
    <property type="project" value="UniProtKB-UniRule"/>
</dbReference>
<dbReference type="Gene3D" id="3.30.160.330">
    <property type="match status" value="1"/>
</dbReference>
<dbReference type="HAMAP" id="MF_04004">
    <property type="entry name" value="PPV_E7"/>
    <property type="match status" value="1"/>
</dbReference>
<dbReference type="InterPro" id="IPR000148">
    <property type="entry name" value="Papilloma_E7"/>
</dbReference>
<dbReference type="Pfam" id="PF00527">
    <property type="entry name" value="E7"/>
    <property type="match status" value="1"/>
</dbReference>
<dbReference type="PIRSF" id="PIRSF003407">
    <property type="entry name" value="Papvi_E7"/>
    <property type="match status" value="1"/>
</dbReference>
<dbReference type="SUPFAM" id="SSF161234">
    <property type="entry name" value="E7 C-terminal domain-like"/>
    <property type="match status" value="1"/>
</dbReference>
<gene>
    <name evidence="1" type="primary">E7</name>
</gene>
<reference key="1">
    <citation type="journal article" date="1991" name="Virology">
        <title>Genome organization and nucleotide sequence of human papillomavirus type 39.</title>
        <authorList>
            <person name="Volpers C."/>
            <person name="Streeck R.E."/>
        </authorList>
    </citation>
    <scope>NUCLEOTIDE SEQUENCE [GENOMIC DNA]</scope>
</reference>
<reference key="2">
    <citation type="journal article" date="2002" name="Rev. Med. Virol.">
        <title>Interactions of SV40 large T antigen and other viral proteins with retinoblastoma tumour suppressor.</title>
        <authorList>
            <person name="Lee C."/>
            <person name="Cho Y."/>
        </authorList>
    </citation>
    <scope>REVIEW</scope>
</reference>
<proteinExistence type="inferred from homology"/>